<feature type="chain" id="PRO_0000122387" description="Chromosomal passenger complex protein bir1">
    <location>
        <begin position="1"/>
        <end position="997"/>
    </location>
</feature>
<feature type="repeat" description="BIR 1">
    <location>
        <begin position="25"/>
        <end position="99"/>
    </location>
</feature>
<feature type="repeat" description="BIR 2">
    <location>
        <begin position="120"/>
        <end position="194"/>
    </location>
</feature>
<feature type="region of interest" description="Disordered" evidence="2">
    <location>
        <begin position="217"/>
        <end position="329"/>
    </location>
</feature>
<feature type="region of interest" description="Disordered" evidence="2">
    <location>
        <begin position="370"/>
        <end position="527"/>
    </location>
</feature>
<feature type="region of interest" description="Disordered" evidence="2">
    <location>
        <begin position="682"/>
        <end position="701"/>
    </location>
</feature>
<feature type="region of interest" description="Disordered" evidence="2">
    <location>
        <begin position="755"/>
        <end position="782"/>
    </location>
</feature>
<feature type="region of interest" description="Disordered" evidence="2">
    <location>
        <begin position="817"/>
        <end position="838"/>
    </location>
</feature>
<feature type="compositionally biased region" description="Polar residues" evidence="2">
    <location>
        <begin position="240"/>
        <end position="252"/>
    </location>
</feature>
<feature type="compositionally biased region" description="Basic residues" evidence="2">
    <location>
        <begin position="288"/>
        <end position="299"/>
    </location>
</feature>
<feature type="compositionally biased region" description="Acidic residues" evidence="2">
    <location>
        <begin position="311"/>
        <end position="320"/>
    </location>
</feature>
<feature type="compositionally biased region" description="Polar residues" evidence="2">
    <location>
        <begin position="370"/>
        <end position="392"/>
    </location>
</feature>
<feature type="compositionally biased region" description="Low complexity" evidence="2">
    <location>
        <begin position="408"/>
        <end position="423"/>
    </location>
</feature>
<feature type="compositionally biased region" description="Basic and acidic residues" evidence="2">
    <location>
        <begin position="426"/>
        <end position="451"/>
    </location>
</feature>
<feature type="compositionally biased region" description="Polar residues" evidence="2">
    <location>
        <begin position="463"/>
        <end position="476"/>
    </location>
</feature>
<feature type="compositionally biased region" description="Polar residues" evidence="2">
    <location>
        <begin position="485"/>
        <end position="512"/>
    </location>
</feature>
<feature type="compositionally biased region" description="Polar residues" evidence="2">
    <location>
        <begin position="756"/>
        <end position="772"/>
    </location>
</feature>
<feature type="compositionally biased region" description="Basic and acidic residues" evidence="2">
    <location>
        <begin position="773"/>
        <end position="782"/>
    </location>
</feature>
<feature type="compositionally biased region" description="Polar residues" evidence="2">
    <location>
        <begin position="817"/>
        <end position="830"/>
    </location>
</feature>
<feature type="binding site" evidence="1">
    <location>
        <position position="163"/>
    </location>
    <ligand>
        <name>Zn(2+)</name>
        <dbReference type="ChEBI" id="CHEBI:29105"/>
    </ligand>
</feature>
<feature type="binding site" evidence="1">
    <location>
        <position position="166"/>
    </location>
    <ligand>
        <name>Zn(2+)</name>
        <dbReference type="ChEBI" id="CHEBI:29105"/>
    </ligand>
</feature>
<feature type="binding site" evidence="1">
    <location>
        <position position="183"/>
    </location>
    <ligand>
        <name>Zn(2+)</name>
        <dbReference type="ChEBI" id="CHEBI:29105"/>
    </ligand>
</feature>
<feature type="binding site" evidence="1">
    <location>
        <position position="190"/>
    </location>
    <ligand>
        <name>Zn(2+)</name>
        <dbReference type="ChEBI" id="CHEBI:29105"/>
    </ligand>
</feature>
<feature type="mutagenesis site" description="In bir1-46; temperature-sensitive." evidence="7">
    <original>C</original>
    <variation>Y</variation>
    <location>
        <position position="976"/>
    </location>
</feature>
<feature type="mutagenesis site" description="In cut17-275; temperature-sensitive." evidence="7">
    <original>A</original>
    <variation>T</variation>
    <location>
        <position position="990"/>
    </location>
</feature>
<comment type="function">
    <text evidence="3 4 7">Component of the chromosomal passenger complex (CPC), a complex that acts as a key regulator of chromosome segregation and cytokinesis. Has a role in chromosome segregation by recruiting condensin and ark1 kinase to appropriate sites as the cell progresses through mitosis. Ark1 activity depends upon bir1 function and phosphorylation. Ark1 with bir1 function is required for full-scale association with kinetochores and formation of a complex with mad3.</text>
</comment>
<comment type="subunit">
    <text evidence="6 8">Component of the CPC complex at least composed of ark1, bir1 and pic1 (Probable). Interacts with the mitotic checkpoint complex (MCC) subunit mad3 (PubMed:12676091).</text>
</comment>
<comment type="interaction">
    <interactant intactId="EBI-15872259">
        <id>O14064</id>
    </interactant>
    <interactant intactId="EBI-15872428">
        <id>O13734</id>
        <label>sgo2</label>
    </interactant>
    <organismsDiffer>false</organismsDiffer>
    <experiments>3</experiments>
</comment>
<comment type="subcellular location">
    <subcellularLocation>
        <location>Nucleus</location>
    </subcellularLocation>
    <subcellularLocation>
        <location>Cytoplasm</location>
        <location>Cytoskeleton</location>
        <location>Spindle</location>
    </subcellularLocation>
    <subcellularLocation>
        <location>Chromosome</location>
        <location>Centromere</location>
    </subcellularLocation>
    <text>Interacts with the outer centromeric regions of the chromosomes during interphase. After chromatid separation moves to the middle of the spindle.</text>
</comment>
<comment type="PTM">
    <text evidence="5">Phosphorylated by ark1.</text>
</comment>
<name>BIR1_SCHPO</name>
<keyword id="KW-0131">Cell cycle</keyword>
<keyword id="KW-0132">Cell division</keyword>
<keyword id="KW-0137">Centromere</keyword>
<keyword id="KW-0158">Chromosome</keyword>
<keyword id="KW-0963">Cytoplasm</keyword>
<keyword id="KW-0206">Cytoskeleton</keyword>
<keyword id="KW-0479">Metal-binding</keyword>
<keyword id="KW-0498">Mitosis</keyword>
<keyword id="KW-0539">Nucleus</keyword>
<keyword id="KW-0597">Phosphoprotein</keyword>
<keyword id="KW-1185">Reference proteome</keyword>
<keyword id="KW-0677">Repeat</keyword>
<keyword id="KW-0862">Zinc</keyword>
<reference key="1">
    <citation type="journal article" date="2001" name="Genes Cells">
        <title>Bir1/Cut17 moving from chromosome to spindle upon the loss of cohesion is required for condensation, spindle elongation and repair.</title>
        <authorList>
            <person name="Morishita J."/>
            <person name="Matsusaka T."/>
            <person name="Goshima G."/>
            <person name="Nakamura T."/>
            <person name="Tatebe H."/>
            <person name="Yanagida M."/>
        </authorList>
    </citation>
    <scope>NUCLEOTIDE SEQUENCE [MRNA]</scope>
    <scope>FUNCTION</scope>
    <scope>SUBCELLULAR LOCATION</scope>
</reference>
<reference key="2">
    <citation type="journal article" date="2002" name="Nature">
        <title>The genome sequence of Schizosaccharomyces pombe.</title>
        <authorList>
            <person name="Wood V."/>
            <person name="Gwilliam R."/>
            <person name="Rajandream M.A."/>
            <person name="Lyne M.H."/>
            <person name="Lyne R."/>
            <person name="Stewart A."/>
            <person name="Sgouros J.G."/>
            <person name="Peat N."/>
            <person name="Hayles J."/>
            <person name="Baker S.G."/>
            <person name="Basham D."/>
            <person name="Bowman S."/>
            <person name="Brooks K."/>
            <person name="Brown D."/>
            <person name="Brown S."/>
            <person name="Chillingworth T."/>
            <person name="Churcher C.M."/>
            <person name="Collins M."/>
            <person name="Connor R."/>
            <person name="Cronin A."/>
            <person name="Davis P."/>
            <person name="Feltwell T."/>
            <person name="Fraser A."/>
            <person name="Gentles S."/>
            <person name="Goble A."/>
            <person name="Hamlin N."/>
            <person name="Harris D.E."/>
            <person name="Hidalgo J."/>
            <person name="Hodgson G."/>
            <person name="Holroyd S."/>
            <person name="Hornsby T."/>
            <person name="Howarth S."/>
            <person name="Huckle E.J."/>
            <person name="Hunt S."/>
            <person name="Jagels K."/>
            <person name="James K.D."/>
            <person name="Jones L."/>
            <person name="Jones M."/>
            <person name="Leather S."/>
            <person name="McDonald S."/>
            <person name="McLean J."/>
            <person name="Mooney P."/>
            <person name="Moule S."/>
            <person name="Mungall K.L."/>
            <person name="Murphy L.D."/>
            <person name="Niblett D."/>
            <person name="Odell C."/>
            <person name="Oliver K."/>
            <person name="O'Neil S."/>
            <person name="Pearson D."/>
            <person name="Quail M.A."/>
            <person name="Rabbinowitsch E."/>
            <person name="Rutherford K.M."/>
            <person name="Rutter S."/>
            <person name="Saunders D."/>
            <person name="Seeger K."/>
            <person name="Sharp S."/>
            <person name="Skelton J."/>
            <person name="Simmonds M.N."/>
            <person name="Squares R."/>
            <person name="Squares S."/>
            <person name="Stevens K."/>
            <person name="Taylor K."/>
            <person name="Taylor R.G."/>
            <person name="Tivey A."/>
            <person name="Walsh S.V."/>
            <person name="Warren T."/>
            <person name="Whitehead S."/>
            <person name="Woodward J.R."/>
            <person name="Volckaert G."/>
            <person name="Aert R."/>
            <person name="Robben J."/>
            <person name="Grymonprez B."/>
            <person name="Weltjens I."/>
            <person name="Vanstreels E."/>
            <person name="Rieger M."/>
            <person name="Schaefer M."/>
            <person name="Mueller-Auer S."/>
            <person name="Gabel C."/>
            <person name="Fuchs M."/>
            <person name="Duesterhoeft A."/>
            <person name="Fritzc C."/>
            <person name="Holzer E."/>
            <person name="Moestl D."/>
            <person name="Hilbert H."/>
            <person name="Borzym K."/>
            <person name="Langer I."/>
            <person name="Beck A."/>
            <person name="Lehrach H."/>
            <person name="Reinhardt R."/>
            <person name="Pohl T.M."/>
            <person name="Eger P."/>
            <person name="Zimmermann W."/>
            <person name="Wedler H."/>
            <person name="Wambutt R."/>
            <person name="Purnelle B."/>
            <person name="Goffeau A."/>
            <person name="Cadieu E."/>
            <person name="Dreano S."/>
            <person name="Gloux S."/>
            <person name="Lelaure V."/>
            <person name="Mottier S."/>
            <person name="Galibert F."/>
            <person name="Aves S.J."/>
            <person name="Xiang Z."/>
            <person name="Hunt C."/>
            <person name="Moore K."/>
            <person name="Hurst S.M."/>
            <person name="Lucas M."/>
            <person name="Rochet M."/>
            <person name="Gaillardin C."/>
            <person name="Tallada V.A."/>
            <person name="Garzon A."/>
            <person name="Thode G."/>
            <person name="Daga R.R."/>
            <person name="Cruzado L."/>
            <person name="Jimenez J."/>
            <person name="Sanchez M."/>
            <person name="del Rey F."/>
            <person name="Benito J."/>
            <person name="Dominguez A."/>
            <person name="Revuelta J.L."/>
            <person name="Moreno S."/>
            <person name="Armstrong J."/>
            <person name="Forsburg S.L."/>
            <person name="Cerutti L."/>
            <person name="Lowe T."/>
            <person name="McCombie W.R."/>
            <person name="Paulsen I."/>
            <person name="Potashkin J."/>
            <person name="Shpakovski G.V."/>
            <person name="Ussery D."/>
            <person name="Barrell B.G."/>
            <person name="Nurse P."/>
        </authorList>
    </citation>
    <scope>NUCLEOTIDE SEQUENCE [LARGE SCALE GENOMIC DNA]</scope>
    <source>
        <strain>972 / ATCC 24843</strain>
    </source>
</reference>
<reference key="3">
    <citation type="journal article" date="2000" name="Genes Cells">
        <title>Large-scale screening of intracellular protein localization in living fission yeast cells by the use of a GFP-fusion genomic DNA library.</title>
        <authorList>
            <person name="Ding D.-Q."/>
            <person name="Tomita Y."/>
            <person name="Yamamoto A."/>
            <person name="Chikashige Y."/>
            <person name="Haraguchi T."/>
            <person name="Hiraoka Y."/>
        </authorList>
    </citation>
    <scope>NUCLEOTIDE SEQUENCE [LARGE SCALE GENOMIC DNA] OF 577-810</scope>
    <scope>SUBCELLULAR LOCATION</scope>
    <source>
        <strain>ATCC 38364 / 968</strain>
    </source>
</reference>
<reference key="4">
    <citation type="journal article" date="1999" name="FEBS Lett.">
        <title>S. pombe Pbh1p: an inhibitor of apoptosis domain containing protein is essential for chromosome segregation.</title>
        <authorList>
            <person name="Rajagopalan S."/>
            <person name="Balasubramanian M.K."/>
        </authorList>
    </citation>
    <scope>FUNCTION</scope>
</reference>
<reference key="5">
    <citation type="journal article" date="1999" name="Proc. Natl. Acad. Sci. U.S.A.">
        <title>Role for yeast inhibitor of apoptosis (IAP)-like proteins in cell division.</title>
        <authorList>
            <person name="Uren A.G."/>
            <person name="Beilharz T."/>
            <person name="O'Connell M.J."/>
            <person name="Bugg S.J."/>
            <person name="van Driel R."/>
            <person name="Vaux D.L."/>
            <person name="Lithgow T."/>
        </authorList>
    </citation>
    <scope>CHARACTERIZATION</scope>
</reference>
<reference key="6">
    <citation type="journal article" date="2002" name="Genetics">
        <title>Schizosaccharomyces pombe Bir1p, a nuclear protein that localizes to kinetochores and the spindle midzone, is essential for chromosome condensation and spindle elongation during mitosis.</title>
        <authorList>
            <person name="Rajagopalan S."/>
            <person name="Balasubramanian M.K."/>
        </authorList>
    </citation>
    <scope>CHARACTERIZATION</scope>
</reference>
<reference key="7">
    <citation type="journal article" date="2002" name="Mol. Biol. Cell">
        <title>The Schizosaccharomyces pombe aurora-related kinase Ark1 interacts with the inner centromere protein Pic1 and mediates chromosome segregation and cytokinesis.</title>
        <authorList>
            <person name="Leverson J.D."/>
            <person name="Huang H.-K."/>
            <person name="Forsburg S.L."/>
            <person name="Hunter T."/>
        </authorList>
    </citation>
    <scope>PHOSPHORYLATION BY ARK1</scope>
</reference>
<reference key="8">
    <citation type="journal article" date="2003" name="Curr. Biol.">
        <title>S. pombe aurora kinase/survivin is required for chromosome condensation and the spindle checkpoint attachment response.</title>
        <authorList>
            <person name="Petersen J."/>
            <person name="Hagan I.M."/>
        </authorList>
    </citation>
    <scope>INTERACTION WITH ARK1 AND MAD3</scope>
</reference>
<reference key="9">
    <citation type="journal article" date="2005" name="Mol. Cell. Biol.">
        <title>Suppressors of Bir1p (Survivin) identify roles for the chromosomal passenger protein Pic1p (INCENP) and the replication initiation factor Psf2p in chromosome segregation.</title>
        <authorList>
            <person name="Huang H.-K."/>
            <person name="Bailis J.M."/>
            <person name="Leverson J.D."/>
            <person name="Gomez E.B."/>
            <person name="Forsburg S.L."/>
            <person name="Hunter T."/>
        </authorList>
    </citation>
    <scope>FUNCTION</scope>
    <scope>SUBCELLULAR LOCATION</scope>
    <scope>MUTAGENESIS OF CYS-976 AND ALA-990</scope>
</reference>
<reference key="10">
    <citation type="journal article" date="2006" name="Nat. Biotechnol.">
        <title>ORFeome cloning and global analysis of protein localization in the fission yeast Schizosaccharomyces pombe.</title>
        <authorList>
            <person name="Matsuyama A."/>
            <person name="Arai R."/>
            <person name="Yashiroda Y."/>
            <person name="Shirai A."/>
            <person name="Kamata A."/>
            <person name="Sekido S."/>
            <person name="Kobayashi Y."/>
            <person name="Hashimoto A."/>
            <person name="Hamamoto M."/>
            <person name="Hiraoka Y."/>
            <person name="Horinouchi S."/>
            <person name="Yoshida M."/>
        </authorList>
    </citation>
    <scope>SUBCELLULAR LOCATION [LARGE SCALE ANALYSIS]</scope>
</reference>
<organism>
    <name type="scientific">Schizosaccharomyces pombe (strain 972 / ATCC 24843)</name>
    <name type="common">Fission yeast</name>
    <dbReference type="NCBI Taxonomy" id="284812"/>
    <lineage>
        <taxon>Eukaryota</taxon>
        <taxon>Fungi</taxon>
        <taxon>Dikarya</taxon>
        <taxon>Ascomycota</taxon>
        <taxon>Taphrinomycotina</taxon>
        <taxon>Schizosaccharomycetes</taxon>
        <taxon>Schizosaccharomycetales</taxon>
        <taxon>Schizosaccharomycetaceae</taxon>
        <taxon>Schizosaccharomyces</taxon>
    </lineage>
</organism>
<proteinExistence type="evidence at protein level"/>
<gene>
    <name type="primary">bir1</name>
    <name type="synonym">cut17</name>
    <name type="synonym">pbh1</name>
    <name type="ORF">SPCC962.02c</name>
    <name type="ORF">SPCP31B10.10c</name>
</gene>
<sequence length="997" mass="112580">MKPITSSSKRRWNRFRREMCNYSKRLDTFQKKKWPRAKPTPETLATVGFYYNPISESNSEERLDNVTCYMCTKSFYDWEDDDDPLKEHITHSPSCPWAYILSSKNNPNQNPQAAALTKCREQTFVDKVWPYTNRPDYHCEPSVMAASGFVYNPTADAKDAAHCLYCDINLHDWEPDDDPYTEHKRRRADCVFFTWKDPNSLSPTKLSFLSTSNIDPEDLTEDNSILPVSPTRDSTKSHKTLNFSPSRKNNLNARPLTMSLYTNTSEEKDSQPTRAPQSPTKPVLLTAPRRKNKSPKKSKPAVFKPVKPIFSDEDEDDDDLTASQPFSKGICNDSMQVAKKNFTEEIPLKEDEKDNELEHLVSPATSVHTTVSDITGHQSVTDESDEQNNCMSTPPKIEIESKIEEEISVVSKSKEISSSVSSVGKEQNHTEKQVAIETPEQQKVEKEDEHLNLQGSFIEESTKQPISSKPSTSSPDMTDAATGGRVSSSSFRDKILQTNFSPRSTIDSFSNISKKRNSEEANDENDETNLKIPIPEKKRKFQEVLQSKNILVSSTEDSHEPVKVTEDSQTAIHVSKFEDLENKSMESEQSLQLLSESENDDKPLIDLIPLLAIKRKDNLVSGVLEKGKSTSTSKTKFDTSIVDFIEKPKTEISEVLPEEKRKAICDESQTVRVSIDRGVTKTRDVSSPVSDEKSENVNHEEANSGHTVMNVHSSLDPQPIVQPNELESGSYLKDLPDRNVGNSEKVTFQEDDINSPKLQSKNNQTVEAVNTETSDKLQEKEANHELENIEKIEEKLTEVDKVSLSDAFPDQEIKNSRTSVQNGTRSVSKNTPEKETKVDKIDNVSKKDVETSPGSCETSSAFAKTYAEKEVTSINLPSVRKPLDESYYDHSISPFDPLCQSSFLAPQTPVKSKHALPLVEANAPPWEPIDFSSLLESPVPNPVEPNKLSEKELDMTVEQWIKFMYAKCAKEFEEACEEKIEWLLEEGKRAEEYIQNL</sequence>
<evidence type="ECO:0000255" key="1">
    <source>
        <dbReference type="PROSITE-ProRule" id="PRU00029"/>
    </source>
</evidence>
<evidence type="ECO:0000256" key="2">
    <source>
        <dbReference type="SAM" id="MobiDB-lite"/>
    </source>
</evidence>
<evidence type="ECO:0000269" key="3">
    <source>
    </source>
</evidence>
<evidence type="ECO:0000269" key="4">
    <source>
    </source>
</evidence>
<evidence type="ECO:0000269" key="5">
    <source>
    </source>
</evidence>
<evidence type="ECO:0000269" key="6">
    <source>
    </source>
</evidence>
<evidence type="ECO:0000269" key="7">
    <source>
    </source>
</evidence>
<evidence type="ECO:0000305" key="8">
    <source>
    </source>
</evidence>
<dbReference type="EMBL" id="AB031034">
    <property type="protein sequence ID" value="BAA83415.1"/>
    <property type="molecule type" value="mRNA"/>
</dbReference>
<dbReference type="EMBL" id="CU329672">
    <property type="protein sequence ID" value="CAA20434.1"/>
    <property type="molecule type" value="Genomic_DNA"/>
</dbReference>
<dbReference type="EMBL" id="AB027919">
    <property type="protein sequence ID" value="BAA87223.1"/>
    <property type="molecule type" value="Genomic_DNA"/>
</dbReference>
<dbReference type="PIR" id="T43523">
    <property type="entry name" value="T43523"/>
</dbReference>
<dbReference type="RefSeq" id="NP_587866.3">
    <property type="nucleotide sequence ID" value="NM_001022859.3"/>
</dbReference>
<dbReference type="BioGRID" id="275454">
    <property type="interactions" value="14"/>
</dbReference>
<dbReference type="DIP" id="DIP-59223N"/>
<dbReference type="FunCoup" id="O14064">
    <property type="interactions" value="173"/>
</dbReference>
<dbReference type="IntAct" id="O14064">
    <property type="interactions" value="3"/>
</dbReference>
<dbReference type="STRING" id="284812.O14064"/>
<dbReference type="iPTMnet" id="O14064"/>
<dbReference type="PaxDb" id="4896-SPCC962.02c.1"/>
<dbReference type="EnsemblFungi" id="SPCC962.02c.1">
    <property type="protein sequence ID" value="SPCC962.02c.1:pep"/>
    <property type="gene ID" value="SPCC962.02c"/>
</dbReference>
<dbReference type="GeneID" id="2538875"/>
<dbReference type="KEGG" id="spo:2538875"/>
<dbReference type="PomBase" id="SPCC962.02c">
    <property type="gene designation" value="bir1"/>
</dbReference>
<dbReference type="VEuPathDB" id="FungiDB:SPCC962.02c"/>
<dbReference type="eggNOG" id="KOG1101">
    <property type="taxonomic scope" value="Eukaryota"/>
</dbReference>
<dbReference type="HOGENOM" id="CLU_300377_0_0_1"/>
<dbReference type="InParanoid" id="O14064"/>
<dbReference type="OMA" id="DEHYNRS"/>
<dbReference type="Reactome" id="R-SPO-111469">
    <property type="pathway name" value="SMAC, XIAP-regulated apoptotic response"/>
</dbReference>
<dbReference type="Reactome" id="R-SPO-5675482">
    <property type="pathway name" value="Regulation of necroptotic cell death"/>
</dbReference>
<dbReference type="Reactome" id="R-SPO-5689880">
    <property type="pathway name" value="Ub-specific processing proteases"/>
</dbReference>
<dbReference type="Reactome" id="R-SPO-8948747">
    <property type="pathway name" value="Regulation of PTEN localization"/>
</dbReference>
<dbReference type="Reactome" id="R-SPO-8948751">
    <property type="pathway name" value="Regulation of PTEN stability and activity"/>
</dbReference>
<dbReference type="PRO" id="PR:O14064"/>
<dbReference type="Proteomes" id="UP000002485">
    <property type="component" value="Chromosome III"/>
</dbReference>
<dbReference type="GO" id="GO:0000785">
    <property type="term" value="C:chromatin"/>
    <property type="evidence" value="ECO:0000314"/>
    <property type="project" value="PomBase"/>
</dbReference>
<dbReference type="GO" id="GO:0032133">
    <property type="term" value="C:chromosome passenger complex"/>
    <property type="evidence" value="ECO:0000314"/>
    <property type="project" value="PomBase"/>
</dbReference>
<dbReference type="GO" id="GO:0005737">
    <property type="term" value="C:cytoplasm"/>
    <property type="evidence" value="ECO:0000318"/>
    <property type="project" value="GO_Central"/>
</dbReference>
<dbReference type="GO" id="GO:0000776">
    <property type="term" value="C:kinetochore"/>
    <property type="evidence" value="ECO:0000314"/>
    <property type="project" value="PomBase"/>
</dbReference>
<dbReference type="GO" id="GO:1990385">
    <property type="term" value="C:meiotic spindle midzone"/>
    <property type="evidence" value="ECO:0000314"/>
    <property type="project" value="PomBase"/>
</dbReference>
<dbReference type="GO" id="GO:0072686">
    <property type="term" value="C:mitotic spindle"/>
    <property type="evidence" value="ECO:0000314"/>
    <property type="project" value="PomBase"/>
</dbReference>
<dbReference type="GO" id="GO:1990023">
    <property type="term" value="C:mitotic spindle midzone"/>
    <property type="evidence" value="ECO:0000314"/>
    <property type="project" value="PomBase"/>
</dbReference>
<dbReference type="GO" id="GO:0005634">
    <property type="term" value="C:nucleus"/>
    <property type="evidence" value="ECO:0000314"/>
    <property type="project" value="PomBase"/>
</dbReference>
<dbReference type="GO" id="GO:0005721">
    <property type="term" value="C:pericentric heterochromatin"/>
    <property type="evidence" value="ECO:0000314"/>
    <property type="project" value="PomBase"/>
</dbReference>
<dbReference type="GO" id="GO:0046872">
    <property type="term" value="F:metal ion binding"/>
    <property type="evidence" value="ECO:0007669"/>
    <property type="project" value="UniProtKB-KW"/>
</dbReference>
<dbReference type="GO" id="GO:0051301">
    <property type="term" value="P:cell division"/>
    <property type="evidence" value="ECO:0007669"/>
    <property type="project" value="UniProtKB-KW"/>
</dbReference>
<dbReference type="GO" id="GO:1990758">
    <property type="term" value="P:mitotic sister chromatid biorientation"/>
    <property type="evidence" value="ECO:0000315"/>
    <property type="project" value="PomBase"/>
</dbReference>
<dbReference type="GO" id="GO:0000070">
    <property type="term" value="P:mitotic sister chromatid segregation"/>
    <property type="evidence" value="ECO:0000315"/>
    <property type="project" value="PomBase"/>
</dbReference>
<dbReference type="GO" id="GO:0051726">
    <property type="term" value="P:regulation of cell cycle"/>
    <property type="evidence" value="ECO:0000318"/>
    <property type="project" value="GO_Central"/>
</dbReference>
<dbReference type="GO" id="GO:1902412">
    <property type="term" value="P:regulation of mitotic cytokinesis"/>
    <property type="evidence" value="ECO:0000315"/>
    <property type="project" value="PomBase"/>
</dbReference>
<dbReference type="GO" id="GO:0023052">
    <property type="term" value="P:signaling"/>
    <property type="evidence" value="ECO:0000303"/>
    <property type="project" value="PomBase"/>
</dbReference>
<dbReference type="CDD" id="cd00022">
    <property type="entry name" value="BIR"/>
    <property type="match status" value="2"/>
</dbReference>
<dbReference type="Gene3D" id="1.10.1170.10">
    <property type="entry name" value="Inhibitor Of Apoptosis Protein (2mihbC-IAP-1), Chain A"/>
    <property type="match status" value="2"/>
</dbReference>
<dbReference type="InterPro" id="IPR051190">
    <property type="entry name" value="Baculoviral_IAP"/>
</dbReference>
<dbReference type="InterPro" id="IPR001370">
    <property type="entry name" value="BIR_rpt"/>
</dbReference>
<dbReference type="PANTHER" id="PTHR46771">
    <property type="entry name" value="DETERIN"/>
    <property type="match status" value="1"/>
</dbReference>
<dbReference type="PANTHER" id="PTHR46771:SF5">
    <property type="entry name" value="DETERIN"/>
    <property type="match status" value="1"/>
</dbReference>
<dbReference type="Pfam" id="PF00653">
    <property type="entry name" value="BIR"/>
    <property type="match status" value="2"/>
</dbReference>
<dbReference type="SMART" id="SM00238">
    <property type="entry name" value="BIR"/>
    <property type="match status" value="2"/>
</dbReference>
<dbReference type="SUPFAM" id="SSF57924">
    <property type="entry name" value="Inhibitor of apoptosis (IAP) repeat"/>
    <property type="match status" value="2"/>
</dbReference>
<dbReference type="PROSITE" id="PS50143">
    <property type="entry name" value="BIR_REPEAT_2"/>
    <property type="match status" value="2"/>
</dbReference>
<protein>
    <recommendedName>
        <fullName>Chromosomal passenger complex protein bir1</fullName>
    </recommendedName>
    <alternativeName>
        <fullName>Chromosome segregation protein cut17</fullName>
    </alternativeName>
</protein>
<accession>O14064</accession>
<accession>Q9USG4</accession>
<accession>Q9UTZ0</accession>